<protein>
    <recommendedName>
        <fullName evidence="1">Orotate phosphoribosyltransferase</fullName>
        <shortName evidence="1">OPRT</shortName>
        <shortName evidence="1">OPRTase</shortName>
        <ecNumber evidence="1">2.4.2.10</ecNumber>
    </recommendedName>
</protein>
<evidence type="ECO:0000255" key="1">
    <source>
        <dbReference type="HAMAP-Rule" id="MF_01208"/>
    </source>
</evidence>
<keyword id="KW-0328">Glycosyltransferase</keyword>
<keyword id="KW-0460">Magnesium</keyword>
<keyword id="KW-0665">Pyrimidine biosynthesis</keyword>
<keyword id="KW-0808">Transferase</keyword>
<accession>B7ICE9</accession>
<sequence>MTTPVSFHPQAFIELALSRGVLKFGEFTLKSGRVSPYFFNAGLLNDGEALSLLAQGYADKLTQCENVDVIFGPAYKGIPFVAATAVALSQTHNKSVPWGFNRKEAKDHGEGGILVGAAVEGKKVWIIDDVITAGTAIREVVTILKNAGATIAGVLVALDRQERGQGELSAIQEVQKELEIPVHALITMKDLMDYLEAKGEKEALANMQAYREKYGI</sequence>
<name>PYRE_ACIB5</name>
<dbReference type="EC" id="2.4.2.10" evidence="1"/>
<dbReference type="EMBL" id="CP001182">
    <property type="protein sequence ID" value="ACJ43143.1"/>
    <property type="molecule type" value="Genomic_DNA"/>
</dbReference>
<dbReference type="RefSeq" id="WP_000211300.1">
    <property type="nucleotide sequence ID" value="NC_011586.2"/>
</dbReference>
<dbReference type="SMR" id="B7ICE9"/>
<dbReference type="KEGG" id="abn:AB57_3791"/>
<dbReference type="HOGENOM" id="CLU_074878_0_1_6"/>
<dbReference type="UniPathway" id="UPA00070">
    <property type="reaction ID" value="UER00119"/>
</dbReference>
<dbReference type="Proteomes" id="UP000007094">
    <property type="component" value="Chromosome"/>
</dbReference>
<dbReference type="GO" id="GO:0005737">
    <property type="term" value="C:cytoplasm"/>
    <property type="evidence" value="ECO:0007669"/>
    <property type="project" value="TreeGrafter"/>
</dbReference>
<dbReference type="GO" id="GO:0000287">
    <property type="term" value="F:magnesium ion binding"/>
    <property type="evidence" value="ECO:0007669"/>
    <property type="project" value="UniProtKB-UniRule"/>
</dbReference>
<dbReference type="GO" id="GO:0004588">
    <property type="term" value="F:orotate phosphoribosyltransferase activity"/>
    <property type="evidence" value="ECO:0007669"/>
    <property type="project" value="UniProtKB-UniRule"/>
</dbReference>
<dbReference type="GO" id="GO:0006207">
    <property type="term" value="P:'de novo' pyrimidine nucleobase biosynthetic process"/>
    <property type="evidence" value="ECO:0007669"/>
    <property type="project" value="TreeGrafter"/>
</dbReference>
<dbReference type="GO" id="GO:0044205">
    <property type="term" value="P:'de novo' UMP biosynthetic process"/>
    <property type="evidence" value="ECO:0007669"/>
    <property type="project" value="UniProtKB-UniRule"/>
</dbReference>
<dbReference type="GO" id="GO:0046132">
    <property type="term" value="P:pyrimidine ribonucleoside biosynthetic process"/>
    <property type="evidence" value="ECO:0007669"/>
    <property type="project" value="TreeGrafter"/>
</dbReference>
<dbReference type="CDD" id="cd06223">
    <property type="entry name" value="PRTases_typeI"/>
    <property type="match status" value="1"/>
</dbReference>
<dbReference type="FunFam" id="3.40.50.2020:FF:000008">
    <property type="entry name" value="Orotate phosphoribosyltransferase"/>
    <property type="match status" value="1"/>
</dbReference>
<dbReference type="Gene3D" id="3.40.50.2020">
    <property type="match status" value="1"/>
</dbReference>
<dbReference type="HAMAP" id="MF_01208">
    <property type="entry name" value="PyrE"/>
    <property type="match status" value="1"/>
</dbReference>
<dbReference type="InterPro" id="IPR023031">
    <property type="entry name" value="OPRT"/>
</dbReference>
<dbReference type="InterPro" id="IPR004467">
    <property type="entry name" value="Or_phspho_trans_dom"/>
</dbReference>
<dbReference type="InterPro" id="IPR000836">
    <property type="entry name" value="PRibTrfase_dom"/>
</dbReference>
<dbReference type="InterPro" id="IPR029057">
    <property type="entry name" value="PRTase-like"/>
</dbReference>
<dbReference type="NCBIfam" id="TIGR00336">
    <property type="entry name" value="pyrE"/>
    <property type="match status" value="1"/>
</dbReference>
<dbReference type="PANTHER" id="PTHR46683">
    <property type="entry name" value="OROTATE PHOSPHORIBOSYLTRANSFERASE 1-RELATED"/>
    <property type="match status" value="1"/>
</dbReference>
<dbReference type="PANTHER" id="PTHR46683:SF1">
    <property type="entry name" value="OROTATE PHOSPHORIBOSYLTRANSFERASE 1-RELATED"/>
    <property type="match status" value="1"/>
</dbReference>
<dbReference type="Pfam" id="PF00156">
    <property type="entry name" value="Pribosyltran"/>
    <property type="match status" value="1"/>
</dbReference>
<dbReference type="SUPFAM" id="SSF53271">
    <property type="entry name" value="PRTase-like"/>
    <property type="match status" value="1"/>
</dbReference>
<feature type="chain" id="PRO_1000138754" description="Orotate phosphoribosyltransferase">
    <location>
        <begin position="1"/>
        <end position="216"/>
    </location>
</feature>
<feature type="binding site" description="in other chain" evidence="1">
    <location>
        <position position="30"/>
    </location>
    <ligand>
        <name>5-phospho-alpha-D-ribose 1-diphosphate</name>
        <dbReference type="ChEBI" id="CHEBI:58017"/>
        <note>ligand shared between dimeric partners</note>
    </ligand>
</feature>
<feature type="binding site" evidence="1">
    <location>
        <begin position="38"/>
        <end position="39"/>
    </location>
    <ligand>
        <name>orotate</name>
        <dbReference type="ChEBI" id="CHEBI:30839"/>
    </ligand>
</feature>
<feature type="binding site" description="in other chain" evidence="1">
    <location>
        <begin position="75"/>
        <end position="76"/>
    </location>
    <ligand>
        <name>5-phospho-alpha-D-ribose 1-diphosphate</name>
        <dbReference type="ChEBI" id="CHEBI:58017"/>
        <note>ligand shared between dimeric partners</note>
    </ligand>
</feature>
<feature type="binding site" evidence="1">
    <location>
        <position position="102"/>
    </location>
    <ligand>
        <name>5-phospho-alpha-D-ribose 1-diphosphate</name>
        <dbReference type="ChEBI" id="CHEBI:58017"/>
        <note>ligand shared between dimeric partners</note>
    </ligand>
</feature>
<feature type="binding site" description="in other chain" evidence="1">
    <location>
        <position position="103"/>
    </location>
    <ligand>
        <name>5-phospho-alpha-D-ribose 1-diphosphate</name>
        <dbReference type="ChEBI" id="CHEBI:58017"/>
        <note>ligand shared between dimeric partners</note>
    </ligand>
</feature>
<feature type="binding site" evidence="1">
    <location>
        <position position="106"/>
    </location>
    <ligand>
        <name>5-phospho-alpha-D-ribose 1-diphosphate</name>
        <dbReference type="ChEBI" id="CHEBI:58017"/>
        <note>ligand shared between dimeric partners</note>
    </ligand>
</feature>
<feature type="binding site" evidence="1">
    <location>
        <position position="108"/>
    </location>
    <ligand>
        <name>5-phospho-alpha-D-ribose 1-diphosphate</name>
        <dbReference type="ChEBI" id="CHEBI:58017"/>
        <note>ligand shared between dimeric partners</note>
    </ligand>
</feature>
<feature type="binding site" description="in other chain" evidence="1">
    <location>
        <begin position="128"/>
        <end position="136"/>
    </location>
    <ligand>
        <name>5-phospho-alpha-D-ribose 1-diphosphate</name>
        <dbReference type="ChEBI" id="CHEBI:58017"/>
        <note>ligand shared between dimeric partners</note>
    </ligand>
</feature>
<feature type="binding site" evidence="1">
    <location>
        <position position="132"/>
    </location>
    <ligand>
        <name>orotate</name>
        <dbReference type="ChEBI" id="CHEBI:30839"/>
    </ligand>
</feature>
<feature type="binding site" evidence="1">
    <location>
        <position position="160"/>
    </location>
    <ligand>
        <name>orotate</name>
        <dbReference type="ChEBI" id="CHEBI:30839"/>
    </ligand>
</feature>
<organism>
    <name type="scientific">Acinetobacter baumannii (strain AB0057)</name>
    <dbReference type="NCBI Taxonomy" id="480119"/>
    <lineage>
        <taxon>Bacteria</taxon>
        <taxon>Pseudomonadati</taxon>
        <taxon>Pseudomonadota</taxon>
        <taxon>Gammaproteobacteria</taxon>
        <taxon>Moraxellales</taxon>
        <taxon>Moraxellaceae</taxon>
        <taxon>Acinetobacter</taxon>
        <taxon>Acinetobacter calcoaceticus/baumannii complex</taxon>
    </lineage>
</organism>
<proteinExistence type="inferred from homology"/>
<reference key="1">
    <citation type="journal article" date="2008" name="J. Bacteriol.">
        <title>Comparative genome sequence analysis of multidrug-resistant Acinetobacter baumannii.</title>
        <authorList>
            <person name="Adams M.D."/>
            <person name="Goglin K."/>
            <person name="Molyneaux N."/>
            <person name="Hujer K.M."/>
            <person name="Lavender H."/>
            <person name="Jamison J.J."/>
            <person name="MacDonald I.J."/>
            <person name="Martin K.M."/>
            <person name="Russo T."/>
            <person name="Campagnari A.A."/>
            <person name="Hujer A.M."/>
            <person name="Bonomo R.A."/>
            <person name="Gill S.R."/>
        </authorList>
    </citation>
    <scope>NUCLEOTIDE SEQUENCE [LARGE SCALE GENOMIC DNA]</scope>
    <source>
        <strain>AB0057</strain>
    </source>
</reference>
<comment type="function">
    <text evidence="1">Catalyzes the transfer of a ribosyl phosphate group from 5-phosphoribose 1-diphosphate to orotate, leading to the formation of orotidine monophosphate (OMP).</text>
</comment>
<comment type="catalytic activity">
    <reaction evidence="1">
        <text>orotidine 5'-phosphate + diphosphate = orotate + 5-phospho-alpha-D-ribose 1-diphosphate</text>
        <dbReference type="Rhea" id="RHEA:10380"/>
        <dbReference type="ChEBI" id="CHEBI:30839"/>
        <dbReference type="ChEBI" id="CHEBI:33019"/>
        <dbReference type="ChEBI" id="CHEBI:57538"/>
        <dbReference type="ChEBI" id="CHEBI:58017"/>
        <dbReference type="EC" id="2.4.2.10"/>
    </reaction>
</comment>
<comment type="cofactor">
    <cofactor evidence="1">
        <name>Mg(2+)</name>
        <dbReference type="ChEBI" id="CHEBI:18420"/>
    </cofactor>
</comment>
<comment type="pathway">
    <text evidence="1">Pyrimidine metabolism; UMP biosynthesis via de novo pathway; UMP from orotate: step 1/2.</text>
</comment>
<comment type="subunit">
    <text evidence="1">Homodimer.</text>
</comment>
<comment type="similarity">
    <text evidence="1">Belongs to the purine/pyrimidine phosphoribosyltransferase family. PyrE subfamily.</text>
</comment>
<gene>
    <name evidence="1" type="primary">pyrE</name>
    <name type="ordered locus">AB57_3791</name>
</gene>